<comment type="similarity">
    <text evidence="1">Belongs to the UPF0303 family.</text>
</comment>
<sequence length="165" mass="17497">MDIAHDLQSIGAQEQALVFPHFDPARAWALGNRMHALATARGHAIAIDIVTFGQPLFYAALAGATPDNADWVRRKRNVVAHFRRSSYAIGLRMQQAGASLADKHGLPISDYSPHGGSFPLTVAGAGVIGSITASGLPQRADHEFVVEALCAELGQDYAALALARS</sequence>
<accession>Q0BFQ6</accession>
<reference key="1">
    <citation type="submission" date="2006-08" db="EMBL/GenBank/DDBJ databases">
        <title>Complete sequence of chromosome 1 of Burkholderia cepacia AMMD.</title>
        <authorList>
            <person name="Copeland A."/>
            <person name="Lucas S."/>
            <person name="Lapidus A."/>
            <person name="Barry K."/>
            <person name="Detter J.C."/>
            <person name="Glavina del Rio T."/>
            <person name="Hammon N."/>
            <person name="Israni S."/>
            <person name="Pitluck S."/>
            <person name="Bruce D."/>
            <person name="Chain P."/>
            <person name="Malfatti S."/>
            <person name="Shin M."/>
            <person name="Vergez L."/>
            <person name="Schmutz J."/>
            <person name="Larimer F."/>
            <person name="Land M."/>
            <person name="Hauser L."/>
            <person name="Kyrpides N."/>
            <person name="Kim E."/>
            <person name="Parke J."/>
            <person name="Coenye T."/>
            <person name="Konstantinidis K."/>
            <person name="Ramette A."/>
            <person name="Tiedje J."/>
            <person name="Richardson P."/>
        </authorList>
    </citation>
    <scope>NUCLEOTIDE SEQUENCE [LARGE SCALE GENOMIC DNA]</scope>
    <source>
        <strain>ATCC BAA-244 / DSM 16087 / CCUG 44356 / LMG 19182 / AMMD</strain>
    </source>
</reference>
<proteinExistence type="inferred from homology"/>
<protein>
    <recommendedName>
        <fullName evidence="1">UPF0303 protein Bamb_1459</fullName>
    </recommendedName>
</protein>
<dbReference type="EMBL" id="CP000440">
    <property type="protein sequence ID" value="ABI87017.1"/>
    <property type="molecule type" value="Genomic_DNA"/>
</dbReference>
<dbReference type="RefSeq" id="WP_011656758.1">
    <property type="nucleotide sequence ID" value="NC_008390.1"/>
</dbReference>
<dbReference type="SMR" id="Q0BFQ6"/>
<dbReference type="GeneID" id="93083139"/>
<dbReference type="KEGG" id="bam:Bamb_1459"/>
<dbReference type="PATRIC" id="fig|339670.21.peg.78"/>
<dbReference type="eggNOG" id="COG4702">
    <property type="taxonomic scope" value="Bacteria"/>
</dbReference>
<dbReference type="Proteomes" id="UP000000662">
    <property type="component" value="Chromosome 1"/>
</dbReference>
<dbReference type="Gene3D" id="3.30.450.150">
    <property type="entry name" value="Haem-degrading domain"/>
    <property type="match status" value="1"/>
</dbReference>
<dbReference type="HAMAP" id="MF_00761">
    <property type="entry name" value="UPF0303"/>
    <property type="match status" value="1"/>
</dbReference>
<dbReference type="InterPro" id="IPR005624">
    <property type="entry name" value="PduO/GlcC-like"/>
</dbReference>
<dbReference type="InterPro" id="IPR038084">
    <property type="entry name" value="PduO/GlcC-like_sf"/>
</dbReference>
<dbReference type="InterPro" id="IPR010371">
    <property type="entry name" value="YBR137W-like"/>
</dbReference>
<dbReference type="NCBIfam" id="NF002695">
    <property type="entry name" value="PRK02487.1-4"/>
    <property type="match status" value="1"/>
</dbReference>
<dbReference type="NCBIfam" id="NF002696">
    <property type="entry name" value="PRK02487.1-5"/>
    <property type="match status" value="1"/>
</dbReference>
<dbReference type="PANTHER" id="PTHR28255">
    <property type="match status" value="1"/>
</dbReference>
<dbReference type="PANTHER" id="PTHR28255:SF1">
    <property type="entry name" value="UPF0303 PROTEIN YBR137W"/>
    <property type="match status" value="1"/>
</dbReference>
<dbReference type="Pfam" id="PF03928">
    <property type="entry name" value="HbpS-like"/>
    <property type="match status" value="1"/>
</dbReference>
<dbReference type="PIRSF" id="PIRSF008757">
    <property type="entry name" value="UCP008757"/>
    <property type="match status" value="1"/>
</dbReference>
<dbReference type="SUPFAM" id="SSF143744">
    <property type="entry name" value="GlcG-like"/>
    <property type="match status" value="1"/>
</dbReference>
<evidence type="ECO:0000255" key="1">
    <source>
        <dbReference type="HAMAP-Rule" id="MF_00761"/>
    </source>
</evidence>
<organism>
    <name type="scientific">Burkholderia ambifaria (strain ATCC BAA-244 / DSM 16087 / CCUG 44356 / LMG 19182 / AMMD)</name>
    <name type="common">Burkholderia cepacia (strain AMMD)</name>
    <dbReference type="NCBI Taxonomy" id="339670"/>
    <lineage>
        <taxon>Bacteria</taxon>
        <taxon>Pseudomonadati</taxon>
        <taxon>Pseudomonadota</taxon>
        <taxon>Betaproteobacteria</taxon>
        <taxon>Burkholderiales</taxon>
        <taxon>Burkholderiaceae</taxon>
        <taxon>Burkholderia</taxon>
        <taxon>Burkholderia cepacia complex</taxon>
    </lineage>
</organism>
<gene>
    <name type="ordered locus">Bamb_1459</name>
</gene>
<name>Y1459_BURCM</name>
<feature type="chain" id="PRO_1000046739" description="UPF0303 protein Bamb_1459">
    <location>
        <begin position="1"/>
        <end position="165"/>
    </location>
</feature>